<geneLocation type="mitochondrion"/>
<organism>
    <name type="scientific">Hylobates lar</name>
    <name type="common">Lar gibbon</name>
    <name type="synonym">White-handed gibbon</name>
    <dbReference type="NCBI Taxonomy" id="9580"/>
    <lineage>
        <taxon>Eukaryota</taxon>
        <taxon>Metazoa</taxon>
        <taxon>Chordata</taxon>
        <taxon>Craniata</taxon>
        <taxon>Vertebrata</taxon>
        <taxon>Euteleostomi</taxon>
        <taxon>Mammalia</taxon>
        <taxon>Eutheria</taxon>
        <taxon>Euarchontoglires</taxon>
        <taxon>Primates</taxon>
        <taxon>Haplorrhini</taxon>
        <taxon>Catarrhini</taxon>
        <taxon>Hylobatidae</taxon>
        <taxon>Hylobates</taxon>
    </lineage>
</organism>
<keyword id="KW-0249">Electron transport</keyword>
<keyword id="KW-0472">Membrane</keyword>
<keyword id="KW-0496">Mitochondrion</keyword>
<keyword id="KW-0999">Mitochondrion inner membrane</keyword>
<keyword id="KW-0520">NAD</keyword>
<keyword id="KW-0679">Respiratory chain</keyword>
<keyword id="KW-1278">Translocase</keyword>
<keyword id="KW-0812">Transmembrane</keyword>
<keyword id="KW-1133">Transmembrane helix</keyword>
<keyword id="KW-0813">Transport</keyword>
<keyword id="KW-0830">Ubiquinone</keyword>
<dbReference type="EC" id="7.1.1.2" evidence="1"/>
<dbReference type="EMBL" id="X99256">
    <property type="protein sequence ID" value="CAA67635.1"/>
    <property type="molecule type" value="Genomic_DNA"/>
</dbReference>
<dbReference type="PIR" id="T11840">
    <property type="entry name" value="T11840"/>
</dbReference>
<dbReference type="RefSeq" id="NP_007829.1">
    <property type="nucleotide sequence ID" value="NC_002082.1"/>
</dbReference>
<dbReference type="SMR" id="Q95708"/>
<dbReference type="GeneID" id="808463"/>
<dbReference type="CTD" id="4537"/>
<dbReference type="GO" id="GO:0005743">
    <property type="term" value="C:mitochondrial inner membrane"/>
    <property type="evidence" value="ECO:0000250"/>
    <property type="project" value="UniProtKB"/>
</dbReference>
<dbReference type="GO" id="GO:0030964">
    <property type="term" value="C:NADH dehydrogenase complex"/>
    <property type="evidence" value="ECO:0007669"/>
    <property type="project" value="TreeGrafter"/>
</dbReference>
<dbReference type="GO" id="GO:0008137">
    <property type="term" value="F:NADH dehydrogenase (ubiquinone) activity"/>
    <property type="evidence" value="ECO:0000250"/>
    <property type="project" value="UniProtKB"/>
</dbReference>
<dbReference type="GO" id="GO:0006120">
    <property type="term" value="P:mitochondrial electron transport, NADH to ubiquinone"/>
    <property type="evidence" value="ECO:0000250"/>
    <property type="project" value="UniProtKB"/>
</dbReference>
<dbReference type="FunFam" id="1.20.58.1610:FF:000004">
    <property type="entry name" value="NADH-quinone oxidoreductase subunit A"/>
    <property type="match status" value="1"/>
</dbReference>
<dbReference type="Gene3D" id="1.20.58.1610">
    <property type="entry name" value="NADH:ubiquinone/plastoquinone oxidoreductase, chain 3"/>
    <property type="match status" value="1"/>
</dbReference>
<dbReference type="InterPro" id="IPR000440">
    <property type="entry name" value="NADH_UbQ/plastoQ_OxRdtase_su3"/>
</dbReference>
<dbReference type="InterPro" id="IPR038430">
    <property type="entry name" value="NDAH_ubi_oxred_su3_sf"/>
</dbReference>
<dbReference type="PANTHER" id="PTHR11058">
    <property type="entry name" value="NADH-UBIQUINONE OXIDOREDUCTASE CHAIN 3"/>
    <property type="match status" value="1"/>
</dbReference>
<dbReference type="PANTHER" id="PTHR11058:SF9">
    <property type="entry name" value="NADH-UBIQUINONE OXIDOREDUCTASE CHAIN 3"/>
    <property type="match status" value="1"/>
</dbReference>
<dbReference type="Pfam" id="PF00507">
    <property type="entry name" value="Oxidored_q4"/>
    <property type="match status" value="1"/>
</dbReference>
<accession>Q95708</accession>
<gene>
    <name evidence="1" type="primary">MT-ND3</name>
    <name type="synonym">MTND3</name>
    <name type="synonym">NADH3</name>
    <name type="synonym">ND3</name>
</gene>
<sequence>MNLALALMINTLLALLLMTITFWLPQLNTYMEKTNPYECGFDPLSPARIPFSMKFFLVAITFLLFDLEIALLLPLPWALQTTNPSLTIASSLTLITILILSLAYEWSQKGLDWVE</sequence>
<feature type="chain" id="PRO_0000117753" description="NADH-ubiquinone oxidoreductase chain 3">
    <location>
        <begin position="1"/>
        <end position="115"/>
    </location>
</feature>
<feature type="transmembrane region" description="Helical" evidence="3">
    <location>
        <begin position="3"/>
        <end position="23"/>
    </location>
</feature>
<feature type="transmembrane region" description="Helical" evidence="3">
    <location>
        <begin position="55"/>
        <end position="75"/>
    </location>
</feature>
<feature type="transmembrane region" description="Helical" evidence="3">
    <location>
        <begin position="86"/>
        <end position="106"/>
    </location>
</feature>
<comment type="function">
    <text evidence="1">Core subunit of the mitochondrial membrane respiratory chain NADH dehydrogenase (Complex I) which catalyzes electron transfer from NADH through the respiratory chain, using ubiquinone as an electron acceptor. Essential for the catalytic activity of complex I.</text>
</comment>
<comment type="catalytic activity">
    <reaction evidence="1">
        <text>a ubiquinone + NADH + 5 H(+)(in) = a ubiquinol + NAD(+) + 4 H(+)(out)</text>
        <dbReference type="Rhea" id="RHEA:29091"/>
        <dbReference type="Rhea" id="RHEA-COMP:9565"/>
        <dbReference type="Rhea" id="RHEA-COMP:9566"/>
        <dbReference type="ChEBI" id="CHEBI:15378"/>
        <dbReference type="ChEBI" id="CHEBI:16389"/>
        <dbReference type="ChEBI" id="CHEBI:17976"/>
        <dbReference type="ChEBI" id="CHEBI:57540"/>
        <dbReference type="ChEBI" id="CHEBI:57945"/>
        <dbReference type="EC" id="7.1.1.2"/>
    </reaction>
</comment>
<comment type="subunit">
    <text evidence="1">Core subunit of respiratory chain NADH dehydrogenase (Complex I) which is composed of 45 different subunits. Interacts with TMEM186. Interacts with TMEM242 (By similarity).</text>
</comment>
<comment type="subcellular location">
    <subcellularLocation>
        <location evidence="2">Mitochondrion inner membrane</location>
        <topology evidence="3">Multi-pass membrane protein</topology>
    </subcellularLocation>
</comment>
<comment type="similarity">
    <text evidence="4">Belongs to the complex I subunit 3 family.</text>
</comment>
<name>NU3M_HYLLA</name>
<reference key="1">
    <citation type="journal article" date="1996" name="Hereditas">
        <title>A complete mitochondrial DNA molecule of the white-handed gibbon, Hylobates lar, and comparison among individual mitochondrial genes of all hominoid genera.</title>
        <authorList>
            <person name="Arnason U."/>
            <person name="Gullberg A."/>
            <person name="Xu X."/>
        </authorList>
    </citation>
    <scope>NUCLEOTIDE SEQUENCE [GENOMIC DNA]</scope>
    <source>
        <strain>Isolate Ester</strain>
    </source>
</reference>
<evidence type="ECO:0000250" key="1">
    <source>
        <dbReference type="UniProtKB" id="P03897"/>
    </source>
</evidence>
<evidence type="ECO:0000250" key="2">
    <source>
        <dbReference type="UniProtKB" id="P03898"/>
    </source>
</evidence>
<evidence type="ECO:0000255" key="3"/>
<evidence type="ECO:0000305" key="4"/>
<protein>
    <recommendedName>
        <fullName evidence="1">NADH-ubiquinone oxidoreductase chain 3</fullName>
        <ecNumber evidence="1">7.1.1.2</ecNumber>
    </recommendedName>
    <alternativeName>
        <fullName>NADH dehydrogenase subunit 3</fullName>
    </alternativeName>
</protein>
<proteinExistence type="inferred from homology"/>